<dbReference type="EMBL" id="CP001013">
    <property type="protein sequence ID" value="ACB34333.1"/>
    <property type="molecule type" value="Genomic_DNA"/>
</dbReference>
<dbReference type="RefSeq" id="WP_012347093.1">
    <property type="nucleotide sequence ID" value="NC_010524.1"/>
</dbReference>
<dbReference type="SMR" id="B1Y234"/>
<dbReference type="STRING" id="395495.Lcho_2066"/>
<dbReference type="KEGG" id="lch:Lcho_2066"/>
<dbReference type="eggNOG" id="COG3132">
    <property type="taxonomic scope" value="Bacteria"/>
</dbReference>
<dbReference type="HOGENOM" id="CLU_057831_0_0_4"/>
<dbReference type="OrthoDB" id="9784785at2"/>
<dbReference type="Proteomes" id="UP000001693">
    <property type="component" value="Chromosome"/>
</dbReference>
<dbReference type="Gene3D" id="1.10.10.10">
    <property type="entry name" value="Winged helix-like DNA-binding domain superfamily/Winged helix DNA-binding domain"/>
    <property type="match status" value="2"/>
</dbReference>
<dbReference type="HAMAP" id="MF_01584">
    <property type="entry name" value="UPF0502"/>
    <property type="match status" value="1"/>
</dbReference>
<dbReference type="InterPro" id="IPR007432">
    <property type="entry name" value="DUF480"/>
</dbReference>
<dbReference type="InterPro" id="IPR036388">
    <property type="entry name" value="WH-like_DNA-bd_sf"/>
</dbReference>
<dbReference type="InterPro" id="IPR036390">
    <property type="entry name" value="WH_DNA-bd_sf"/>
</dbReference>
<dbReference type="PANTHER" id="PTHR38768">
    <property type="entry name" value="UPF0502 PROTEIN YCEH"/>
    <property type="match status" value="1"/>
</dbReference>
<dbReference type="PANTHER" id="PTHR38768:SF1">
    <property type="entry name" value="UPF0502 PROTEIN YCEH"/>
    <property type="match status" value="1"/>
</dbReference>
<dbReference type="Pfam" id="PF04337">
    <property type="entry name" value="DUF480"/>
    <property type="match status" value="1"/>
</dbReference>
<dbReference type="SUPFAM" id="SSF46785">
    <property type="entry name" value="Winged helix' DNA-binding domain"/>
    <property type="match status" value="2"/>
</dbReference>
<accession>B1Y234</accession>
<reference key="1">
    <citation type="submission" date="2008-03" db="EMBL/GenBank/DDBJ databases">
        <title>Complete sequence of Leptothrix cholodnii SP-6.</title>
        <authorList>
            <consortium name="US DOE Joint Genome Institute"/>
            <person name="Copeland A."/>
            <person name="Lucas S."/>
            <person name="Lapidus A."/>
            <person name="Glavina del Rio T."/>
            <person name="Dalin E."/>
            <person name="Tice H."/>
            <person name="Bruce D."/>
            <person name="Goodwin L."/>
            <person name="Pitluck S."/>
            <person name="Chertkov O."/>
            <person name="Brettin T."/>
            <person name="Detter J.C."/>
            <person name="Han C."/>
            <person name="Kuske C.R."/>
            <person name="Schmutz J."/>
            <person name="Larimer F."/>
            <person name="Land M."/>
            <person name="Hauser L."/>
            <person name="Kyrpides N."/>
            <person name="Lykidis A."/>
            <person name="Emerson D."/>
            <person name="Richardson P."/>
        </authorList>
    </citation>
    <scope>NUCLEOTIDE SEQUENCE [LARGE SCALE GENOMIC DNA]</scope>
    <source>
        <strain>ATCC 51168 / LMG 8142 / SP-6</strain>
    </source>
</reference>
<sequence>MTRDLTPVEARIVGVLVEKQSTVPDTYPLSLNSLVAGCNQKTTRDPVMTLTDAQVLLAIDELKSLHLVLEGSGSRVVRYEHNLGRVLGVPGAAVALLATLMLRGPQTAAELRAHSERLHRFADVSSVEGFLDELAEKSPPRVLKLPRAPGAREARWVHLLCGEVDVAALSVGGAASQMAGGAADDELALLRAEHKQVLAEVALLRSQVQRLADELGVNLDPA</sequence>
<proteinExistence type="inferred from homology"/>
<comment type="similarity">
    <text evidence="1">Belongs to the UPF0502 family.</text>
</comment>
<protein>
    <recommendedName>
        <fullName evidence="1">UPF0502 protein Lcho_2066</fullName>
    </recommendedName>
</protein>
<keyword id="KW-1185">Reference proteome</keyword>
<name>Y2066_LEPCP</name>
<evidence type="ECO:0000255" key="1">
    <source>
        <dbReference type="HAMAP-Rule" id="MF_01584"/>
    </source>
</evidence>
<feature type="chain" id="PRO_0000382563" description="UPF0502 protein Lcho_2066">
    <location>
        <begin position="1"/>
        <end position="222"/>
    </location>
</feature>
<gene>
    <name type="ordered locus">Lcho_2066</name>
</gene>
<organism>
    <name type="scientific">Leptothrix cholodnii (strain ATCC 51168 / LMG 8142 / SP-6)</name>
    <name type="common">Leptothrix discophora (strain SP-6)</name>
    <dbReference type="NCBI Taxonomy" id="395495"/>
    <lineage>
        <taxon>Bacteria</taxon>
        <taxon>Pseudomonadati</taxon>
        <taxon>Pseudomonadota</taxon>
        <taxon>Betaproteobacteria</taxon>
        <taxon>Burkholderiales</taxon>
        <taxon>Sphaerotilaceae</taxon>
        <taxon>Leptothrix</taxon>
    </lineage>
</organism>